<proteinExistence type="inferred from homology"/>
<name>UBIA_YERPY</name>
<organism>
    <name type="scientific">Yersinia pseudotuberculosis serotype O:3 (strain YPIII)</name>
    <dbReference type="NCBI Taxonomy" id="502800"/>
    <lineage>
        <taxon>Bacteria</taxon>
        <taxon>Pseudomonadati</taxon>
        <taxon>Pseudomonadota</taxon>
        <taxon>Gammaproteobacteria</taxon>
        <taxon>Enterobacterales</taxon>
        <taxon>Yersiniaceae</taxon>
        <taxon>Yersinia</taxon>
    </lineage>
</organism>
<comment type="function">
    <text evidence="1">Catalyzes the prenylation of para-hydroxybenzoate (PHB) with an all-trans polyprenyl group. Mediates the second step in the final reaction sequence of ubiquinone-8 (UQ-8) biosynthesis, which is the condensation of the polyisoprenoid side chain with PHB, generating the first membrane-bound Q intermediate 3-octaprenyl-4-hydroxybenzoate.</text>
</comment>
<comment type="catalytic activity">
    <reaction evidence="1">
        <text>all-trans-octaprenyl diphosphate + 4-hydroxybenzoate = 4-hydroxy-3-(all-trans-octaprenyl)benzoate + diphosphate</text>
        <dbReference type="Rhea" id="RHEA:27782"/>
        <dbReference type="ChEBI" id="CHEBI:1617"/>
        <dbReference type="ChEBI" id="CHEBI:17879"/>
        <dbReference type="ChEBI" id="CHEBI:33019"/>
        <dbReference type="ChEBI" id="CHEBI:57711"/>
        <dbReference type="EC" id="2.5.1.39"/>
    </reaction>
</comment>
<comment type="cofactor">
    <cofactor evidence="1">
        <name>Mg(2+)</name>
        <dbReference type="ChEBI" id="CHEBI:18420"/>
    </cofactor>
</comment>
<comment type="pathway">
    <text evidence="1">Cofactor biosynthesis; ubiquinone biosynthesis.</text>
</comment>
<comment type="subcellular location">
    <subcellularLocation>
        <location evidence="1">Cell inner membrane</location>
        <topology evidence="1">Multi-pass membrane protein</topology>
    </subcellularLocation>
</comment>
<comment type="similarity">
    <text evidence="1">Belongs to the UbiA prenyltransferase family.</text>
</comment>
<accession>B1JNE6</accession>
<dbReference type="EC" id="2.5.1.39" evidence="1"/>
<dbReference type="EMBL" id="CP000950">
    <property type="protein sequence ID" value="ACA70128.1"/>
    <property type="molecule type" value="Genomic_DNA"/>
</dbReference>
<dbReference type="RefSeq" id="WP_002209088.1">
    <property type="nucleotide sequence ID" value="NZ_CP009792.1"/>
</dbReference>
<dbReference type="SMR" id="B1JNE6"/>
<dbReference type="GeneID" id="57974293"/>
<dbReference type="KEGG" id="ypy:YPK_3863"/>
<dbReference type="PATRIC" id="fig|502800.11.peg.210"/>
<dbReference type="UniPathway" id="UPA00232"/>
<dbReference type="GO" id="GO:0005886">
    <property type="term" value="C:plasma membrane"/>
    <property type="evidence" value="ECO:0007669"/>
    <property type="project" value="UniProtKB-SubCell"/>
</dbReference>
<dbReference type="GO" id="GO:0008412">
    <property type="term" value="F:4-hydroxybenzoate polyprenyltransferase activity"/>
    <property type="evidence" value="ECO:0007669"/>
    <property type="project" value="UniProtKB-UniRule"/>
</dbReference>
<dbReference type="GO" id="GO:0006744">
    <property type="term" value="P:ubiquinone biosynthetic process"/>
    <property type="evidence" value="ECO:0007669"/>
    <property type="project" value="UniProtKB-UniRule"/>
</dbReference>
<dbReference type="CDD" id="cd13959">
    <property type="entry name" value="PT_UbiA_COQ2"/>
    <property type="match status" value="1"/>
</dbReference>
<dbReference type="FunFam" id="1.10.357.140:FF:000002">
    <property type="entry name" value="4-hydroxybenzoate octaprenyltransferase"/>
    <property type="match status" value="1"/>
</dbReference>
<dbReference type="FunFam" id="1.20.120.1780:FF:000001">
    <property type="entry name" value="4-hydroxybenzoate octaprenyltransferase"/>
    <property type="match status" value="1"/>
</dbReference>
<dbReference type="Gene3D" id="1.10.357.140">
    <property type="entry name" value="UbiA prenyltransferase"/>
    <property type="match status" value="1"/>
</dbReference>
<dbReference type="Gene3D" id="1.20.120.1780">
    <property type="entry name" value="UbiA prenyltransferase"/>
    <property type="match status" value="1"/>
</dbReference>
<dbReference type="HAMAP" id="MF_01635">
    <property type="entry name" value="UbiA"/>
    <property type="match status" value="1"/>
</dbReference>
<dbReference type="InterPro" id="IPR006370">
    <property type="entry name" value="HB_polyprenyltransferase-like"/>
</dbReference>
<dbReference type="InterPro" id="IPR039653">
    <property type="entry name" value="Prenyltransferase"/>
</dbReference>
<dbReference type="InterPro" id="IPR000537">
    <property type="entry name" value="UbiA_prenyltransferase"/>
</dbReference>
<dbReference type="InterPro" id="IPR030470">
    <property type="entry name" value="UbiA_prenylTrfase_CS"/>
</dbReference>
<dbReference type="InterPro" id="IPR044878">
    <property type="entry name" value="UbiA_sf"/>
</dbReference>
<dbReference type="NCBIfam" id="TIGR01474">
    <property type="entry name" value="ubiA_proteo"/>
    <property type="match status" value="1"/>
</dbReference>
<dbReference type="PANTHER" id="PTHR11048:SF28">
    <property type="entry name" value="4-HYDROXYBENZOATE POLYPRENYLTRANSFERASE, MITOCHONDRIAL"/>
    <property type="match status" value="1"/>
</dbReference>
<dbReference type="PANTHER" id="PTHR11048">
    <property type="entry name" value="PRENYLTRANSFERASES"/>
    <property type="match status" value="1"/>
</dbReference>
<dbReference type="Pfam" id="PF01040">
    <property type="entry name" value="UbiA"/>
    <property type="match status" value="1"/>
</dbReference>
<dbReference type="PROSITE" id="PS00943">
    <property type="entry name" value="UBIA"/>
    <property type="match status" value="1"/>
</dbReference>
<gene>
    <name evidence="1" type="primary">ubiA</name>
    <name type="ordered locus">YPK_3863</name>
</gene>
<protein>
    <recommendedName>
        <fullName evidence="1">4-hydroxybenzoate octaprenyltransferase</fullName>
        <ecNumber evidence="1">2.5.1.39</ecNumber>
    </recommendedName>
    <alternativeName>
        <fullName evidence="1">4-HB polyprenyltransferase</fullName>
    </alternativeName>
</protein>
<evidence type="ECO:0000255" key="1">
    <source>
        <dbReference type="HAMAP-Rule" id="MF_01635"/>
    </source>
</evidence>
<keyword id="KW-0997">Cell inner membrane</keyword>
<keyword id="KW-1003">Cell membrane</keyword>
<keyword id="KW-0460">Magnesium</keyword>
<keyword id="KW-0472">Membrane</keyword>
<keyword id="KW-0808">Transferase</keyword>
<keyword id="KW-0812">Transmembrane</keyword>
<keyword id="KW-1133">Transmembrane helix</keyword>
<keyword id="KW-0831">Ubiquinone biosynthesis</keyword>
<reference key="1">
    <citation type="submission" date="2008-02" db="EMBL/GenBank/DDBJ databases">
        <title>Complete sequence of Yersinia pseudotuberculosis YPIII.</title>
        <authorList>
            <consortium name="US DOE Joint Genome Institute"/>
            <person name="Copeland A."/>
            <person name="Lucas S."/>
            <person name="Lapidus A."/>
            <person name="Glavina del Rio T."/>
            <person name="Dalin E."/>
            <person name="Tice H."/>
            <person name="Bruce D."/>
            <person name="Goodwin L."/>
            <person name="Pitluck S."/>
            <person name="Munk A.C."/>
            <person name="Brettin T."/>
            <person name="Detter J.C."/>
            <person name="Han C."/>
            <person name="Tapia R."/>
            <person name="Schmutz J."/>
            <person name="Larimer F."/>
            <person name="Land M."/>
            <person name="Hauser L."/>
            <person name="Challacombe J.F."/>
            <person name="Green L."/>
            <person name="Lindler L.E."/>
            <person name="Nikolich M.P."/>
            <person name="Richardson P."/>
        </authorList>
    </citation>
    <scope>NUCLEOTIDE SEQUENCE [LARGE SCALE GENOMIC DNA]</scope>
    <source>
        <strain>YPIII</strain>
    </source>
</reference>
<sequence length="288" mass="32280">MKGSTVHTKWQAYCRLMRIDKPIGSLLLLWPTLWALWLAGRGIPEAKILVVFVLGVFFMRAAGCVVNDYADRHIDGFVKRTASRPLPSGTISEKESKILFVVLILLSFGLVLTLNSMTIWLSLAALALAWIYPFMKRVTHLPQVVLGAAFGWSIPMGFAAVSESLPLVCWLLLLANICWTVAYDTQYAMVDRDDDLRIGVKSTAILFGQHDKLIIGLLQLATLLLMVAIGWLMNLGGAFYWSILLAGALFTHQQKMIAQREREPCFRAFLNNNYVGLVLFLGILISYW</sequence>
<feature type="chain" id="PRO_1000186703" description="4-hydroxybenzoate octaprenyltransferase">
    <location>
        <begin position="1"/>
        <end position="288"/>
    </location>
</feature>
<feature type="transmembrane region" description="Helical" evidence="1">
    <location>
        <begin position="23"/>
        <end position="43"/>
    </location>
</feature>
<feature type="transmembrane region" description="Helical" evidence="1">
    <location>
        <begin position="46"/>
        <end position="66"/>
    </location>
</feature>
<feature type="transmembrane region" description="Helical" evidence="1">
    <location>
        <begin position="98"/>
        <end position="118"/>
    </location>
</feature>
<feature type="transmembrane region" description="Helical" evidence="1">
    <location>
        <begin position="141"/>
        <end position="161"/>
    </location>
</feature>
<feature type="transmembrane region" description="Helical" evidence="1">
    <location>
        <begin position="163"/>
        <end position="183"/>
    </location>
</feature>
<feature type="transmembrane region" description="Helical" evidence="1">
    <location>
        <begin position="213"/>
        <end position="233"/>
    </location>
</feature>
<feature type="transmembrane region" description="Helical" evidence="1">
    <location>
        <begin position="234"/>
        <end position="254"/>
    </location>
</feature>
<feature type="transmembrane region" description="Helical" evidence="1">
    <location>
        <begin position="268"/>
        <end position="288"/>
    </location>
</feature>